<proteinExistence type="inferred from homology"/>
<gene>
    <name evidence="1" type="primary">glyQS</name>
    <name type="ordered locus">UUR10_0564</name>
</gene>
<keyword id="KW-0030">Aminoacyl-tRNA synthetase</keyword>
<keyword id="KW-0067">ATP-binding</keyword>
<keyword id="KW-0963">Cytoplasm</keyword>
<keyword id="KW-0436">Ligase</keyword>
<keyword id="KW-0547">Nucleotide-binding</keyword>
<keyword id="KW-0648">Protein biosynthesis</keyword>
<sequence length="473" mass="55372">MKNKFKTQEELVNHLKTVGFVFANSEIYNGLANAWDYGPLGVLLKNNLKNLWWKEFVTKQKDVVGLDSAIILNPLVWKASGHLDNFSDPLIDCKNCKARYRADKLIESFDENIHIAENSSNEEFAKVLNDYEISCPTCKQFNWTEIRHFNLMFKTYQGVIEDAKNVVYLRPETAQGIFVNFKNVQRSMRLHLPFGIAQIGKSFRNEITPGNFIFRTREFEQMEIEFFLKEESAYDIFDKYLNQIENWLVSACGLSLNNLRKHEHPKEELSHYSKKTIDFEYNFLHGFSELYGIAYRTNYDLSVHMNLSKKDLTYFDEQTKEKYVPHVIEPSVGVERLLYAILTEATFIEKLENDDERILMDLKYDLAPYKIAVMPLVNKLKDKAEEIYGKILDLNISATFDNSGSIGKRYRRQDAIGTIYCLTIDFDSLDDQQDPSFTIRERNSMAQKRIKLSELPLYLNQKAHEDFQRQCQK</sequence>
<feature type="chain" id="PRO_1000101170" description="Glycine--tRNA ligase">
    <location>
        <begin position="1"/>
        <end position="473"/>
    </location>
</feature>
<feature type="binding site" evidence="1">
    <location>
        <position position="101"/>
    </location>
    <ligand>
        <name>substrate</name>
    </ligand>
</feature>
<feature type="binding site" evidence="1">
    <location>
        <position position="172"/>
    </location>
    <ligand>
        <name>substrate</name>
    </ligand>
</feature>
<feature type="binding site" evidence="1">
    <location>
        <begin position="204"/>
        <end position="206"/>
    </location>
    <ligand>
        <name>ATP</name>
        <dbReference type="ChEBI" id="CHEBI:30616"/>
    </ligand>
</feature>
<feature type="binding site" evidence="1">
    <location>
        <begin position="214"/>
        <end position="219"/>
    </location>
    <ligand>
        <name>ATP</name>
        <dbReference type="ChEBI" id="CHEBI:30616"/>
    </ligand>
</feature>
<feature type="binding site" evidence="1">
    <location>
        <begin position="219"/>
        <end position="223"/>
    </location>
    <ligand>
        <name>substrate</name>
    </ligand>
</feature>
<feature type="binding site" evidence="1">
    <location>
        <begin position="289"/>
        <end position="290"/>
    </location>
    <ligand>
        <name>ATP</name>
        <dbReference type="ChEBI" id="CHEBI:30616"/>
    </ligand>
</feature>
<feature type="binding site" evidence="1">
    <location>
        <begin position="329"/>
        <end position="333"/>
    </location>
    <ligand>
        <name>substrate</name>
    </ligand>
</feature>
<feature type="binding site" evidence="1">
    <location>
        <begin position="333"/>
        <end position="336"/>
    </location>
    <ligand>
        <name>ATP</name>
        <dbReference type="ChEBI" id="CHEBI:30616"/>
    </ligand>
</feature>
<evidence type="ECO:0000255" key="1">
    <source>
        <dbReference type="HAMAP-Rule" id="MF_00253"/>
    </source>
</evidence>
<accession>B5ZC00</accession>
<name>SYG_UREU1</name>
<reference key="1">
    <citation type="submission" date="2008-10" db="EMBL/GenBank/DDBJ databases">
        <title>Genome sequence of Ureaplasma urealyticum serovar 10 ATCC-33699.</title>
        <authorList>
            <person name="Shrivastava S."/>
            <person name="Methe B.A."/>
            <person name="Glass J."/>
            <person name="White K."/>
            <person name="Duffy L.B."/>
        </authorList>
    </citation>
    <scope>NUCLEOTIDE SEQUENCE [LARGE SCALE GENOMIC DNA]</scope>
    <source>
        <strain>ATCC 33699 / Western</strain>
    </source>
</reference>
<protein>
    <recommendedName>
        <fullName evidence="1">Glycine--tRNA ligase</fullName>
        <ecNumber evidence="1">6.1.1.14</ecNumber>
    </recommendedName>
    <alternativeName>
        <fullName evidence="1">Glycyl-tRNA synthetase</fullName>
        <shortName evidence="1">GlyRS</shortName>
    </alternativeName>
</protein>
<organism>
    <name type="scientific">Ureaplasma urealyticum serovar 10 (strain ATCC 33699 / Western)</name>
    <dbReference type="NCBI Taxonomy" id="565575"/>
    <lineage>
        <taxon>Bacteria</taxon>
        <taxon>Bacillati</taxon>
        <taxon>Mycoplasmatota</taxon>
        <taxon>Mycoplasmoidales</taxon>
        <taxon>Mycoplasmoidaceae</taxon>
        <taxon>Ureaplasma</taxon>
    </lineage>
</organism>
<comment type="function">
    <text evidence="1">Catalyzes the attachment of glycine to tRNA(Gly).</text>
</comment>
<comment type="catalytic activity">
    <reaction evidence="1">
        <text>tRNA(Gly) + glycine + ATP = glycyl-tRNA(Gly) + AMP + diphosphate</text>
        <dbReference type="Rhea" id="RHEA:16013"/>
        <dbReference type="Rhea" id="RHEA-COMP:9664"/>
        <dbReference type="Rhea" id="RHEA-COMP:9683"/>
        <dbReference type="ChEBI" id="CHEBI:30616"/>
        <dbReference type="ChEBI" id="CHEBI:33019"/>
        <dbReference type="ChEBI" id="CHEBI:57305"/>
        <dbReference type="ChEBI" id="CHEBI:78442"/>
        <dbReference type="ChEBI" id="CHEBI:78522"/>
        <dbReference type="ChEBI" id="CHEBI:456215"/>
        <dbReference type="EC" id="6.1.1.14"/>
    </reaction>
</comment>
<comment type="subunit">
    <text evidence="1">Homodimer.</text>
</comment>
<comment type="subcellular location">
    <subcellularLocation>
        <location evidence="1">Cytoplasm</location>
    </subcellularLocation>
</comment>
<comment type="similarity">
    <text evidence="1">Belongs to the class-II aminoacyl-tRNA synthetase family.</text>
</comment>
<dbReference type="EC" id="6.1.1.14" evidence="1"/>
<dbReference type="EMBL" id="CP001184">
    <property type="protein sequence ID" value="ACI60310.1"/>
    <property type="molecule type" value="Genomic_DNA"/>
</dbReference>
<dbReference type="RefSeq" id="WP_004025511.1">
    <property type="nucleotide sequence ID" value="NC_011374.1"/>
</dbReference>
<dbReference type="SMR" id="B5ZC00"/>
<dbReference type="STRING" id="565575.UUR10_0564"/>
<dbReference type="KEGG" id="uue:UUR10_0564"/>
<dbReference type="eggNOG" id="COG0423">
    <property type="taxonomic scope" value="Bacteria"/>
</dbReference>
<dbReference type="HOGENOM" id="CLU_015515_2_0_14"/>
<dbReference type="OrthoDB" id="9760853at2"/>
<dbReference type="Proteomes" id="UP000002018">
    <property type="component" value="Chromosome"/>
</dbReference>
<dbReference type="GO" id="GO:0005737">
    <property type="term" value="C:cytoplasm"/>
    <property type="evidence" value="ECO:0007669"/>
    <property type="project" value="UniProtKB-SubCell"/>
</dbReference>
<dbReference type="GO" id="GO:0005524">
    <property type="term" value="F:ATP binding"/>
    <property type="evidence" value="ECO:0007669"/>
    <property type="project" value="UniProtKB-UniRule"/>
</dbReference>
<dbReference type="GO" id="GO:0004820">
    <property type="term" value="F:glycine-tRNA ligase activity"/>
    <property type="evidence" value="ECO:0000250"/>
    <property type="project" value="UniProtKB"/>
</dbReference>
<dbReference type="GO" id="GO:0046983">
    <property type="term" value="F:protein dimerization activity"/>
    <property type="evidence" value="ECO:0000250"/>
    <property type="project" value="UniProtKB"/>
</dbReference>
<dbReference type="GO" id="GO:0006426">
    <property type="term" value="P:glycyl-tRNA aminoacylation"/>
    <property type="evidence" value="ECO:0007669"/>
    <property type="project" value="UniProtKB-UniRule"/>
</dbReference>
<dbReference type="CDD" id="cd00774">
    <property type="entry name" value="GlyRS-like_core"/>
    <property type="match status" value="1"/>
</dbReference>
<dbReference type="CDD" id="cd00858">
    <property type="entry name" value="GlyRS_anticodon"/>
    <property type="match status" value="1"/>
</dbReference>
<dbReference type="FunFam" id="3.40.50.800:FF:000029">
    <property type="entry name" value="Glycine--tRNA ligase"/>
    <property type="match status" value="1"/>
</dbReference>
<dbReference type="Gene3D" id="3.40.50.800">
    <property type="entry name" value="Anticodon-binding domain"/>
    <property type="match status" value="1"/>
</dbReference>
<dbReference type="Gene3D" id="3.30.930.10">
    <property type="entry name" value="Bira Bifunctional Protein, Domain 2"/>
    <property type="match status" value="1"/>
</dbReference>
<dbReference type="HAMAP" id="MF_00253_B">
    <property type="entry name" value="Gly_tRNA_synth_B"/>
    <property type="match status" value="1"/>
</dbReference>
<dbReference type="InterPro" id="IPR002314">
    <property type="entry name" value="aa-tRNA-synt_IIb"/>
</dbReference>
<dbReference type="InterPro" id="IPR006195">
    <property type="entry name" value="aa-tRNA-synth_II"/>
</dbReference>
<dbReference type="InterPro" id="IPR045864">
    <property type="entry name" value="aa-tRNA-synth_II/BPL/LPL"/>
</dbReference>
<dbReference type="InterPro" id="IPR004154">
    <property type="entry name" value="Anticodon-bd"/>
</dbReference>
<dbReference type="InterPro" id="IPR036621">
    <property type="entry name" value="Anticodon-bd_dom_sf"/>
</dbReference>
<dbReference type="InterPro" id="IPR027031">
    <property type="entry name" value="Gly-tRNA_synthase/POLG2"/>
</dbReference>
<dbReference type="InterPro" id="IPR022961">
    <property type="entry name" value="Gly_tRNA_ligase_bac"/>
</dbReference>
<dbReference type="InterPro" id="IPR033731">
    <property type="entry name" value="GlyRS-like_core"/>
</dbReference>
<dbReference type="InterPro" id="IPR002315">
    <property type="entry name" value="tRNA-synt_gly"/>
</dbReference>
<dbReference type="NCBIfam" id="TIGR00389">
    <property type="entry name" value="glyS_dimeric"/>
    <property type="match status" value="1"/>
</dbReference>
<dbReference type="NCBIfam" id="NF003211">
    <property type="entry name" value="PRK04173.1"/>
    <property type="match status" value="1"/>
</dbReference>
<dbReference type="PANTHER" id="PTHR10745:SF8">
    <property type="entry name" value="DNA POLYMERASE SUBUNIT GAMMA-2, MITOCHONDRIAL"/>
    <property type="match status" value="1"/>
</dbReference>
<dbReference type="PANTHER" id="PTHR10745">
    <property type="entry name" value="GLYCYL-TRNA SYNTHETASE/DNA POLYMERASE SUBUNIT GAMMA-2"/>
    <property type="match status" value="1"/>
</dbReference>
<dbReference type="Pfam" id="PF03129">
    <property type="entry name" value="HGTP_anticodon"/>
    <property type="match status" value="1"/>
</dbReference>
<dbReference type="Pfam" id="PF00587">
    <property type="entry name" value="tRNA-synt_2b"/>
    <property type="match status" value="1"/>
</dbReference>
<dbReference type="PRINTS" id="PR01043">
    <property type="entry name" value="TRNASYNTHGLY"/>
</dbReference>
<dbReference type="SUPFAM" id="SSF52954">
    <property type="entry name" value="Class II aaRS ABD-related"/>
    <property type="match status" value="1"/>
</dbReference>
<dbReference type="SUPFAM" id="SSF55681">
    <property type="entry name" value="Class II aaRS and biotin synthetases"/>
    <property type="match status" value="1"/>
</dbReference>
<dbReference type="PROSITE" id="PS50862">
    <property type="entry name" value="AA_TRNA_LIGASE_II"/>
    <property type="match status" value="1"/>
</dbReference>